<name>RL5_KINRD</name>
<proteinExistence type="inferred from homology"/>
<dbReference type="EMBL" id="CP000750">
    <property type="protein sequence ID" value="ABS02189.1"/>
    <property type="molecule type" value="Genomic_DNA"/>
</dbReference>
<dbReference type="RefSeq" id="WP_012084969.1">
    <property type="nucleotide sequence ID" value="NC_009664.2"/>
</dbReference>
<dbReference type="SMR" id="A6W5V0"/>
<dbReference type="STRING" id="266940.Krad_0700"/>
<dbReference type="KEGG" id="kra:Krad_0700"/>
<dbReference type="eggNOG" id="COG0094">
    <property type="taxonomic scope" value="Bacteria"/>
</dbReference>
<dbReference type="HOGENOM" id="CLU_061015_2_1_11"/>
<dbReference type="OrthoDB" id="9806626at2"/>
<dbReference type="Proteomes" id="UP000001116">
    <property type="component" value="Chromosome"/>
</dbReference>
<dbReference type="GO" id="GO:1990904">
    <property type="term" value="C:ribonucleoprotein complex"/>
    <property type="evidence" value="ECO:0007669"/>
    <property type="project" value="UniProtKB-KW"/>
</dbReference>
<dbReference type="GO" id="GO:0005840">
    <property type="term" value="C:ribosome"/>
    <property type="evidence" value="ECO:0007669"/>
    <property type="project" value="UniProtKB-KW"/>
</dbReference>
<dbReference type="GO" id="GO:0019843">
    <property type="term" value="F:rRNA binding"/>
    <property type="evidence" value="ECO:0007669"/>
    <property type="project" value="UniProtKB-UniRule"/>
</dbReference>
<dbReference type="GO" id="GO:0003735">
    <property type="term" value="F:structural constituent of ribosome"/>
    <property type="evidence" value="ECO:0007669"/>
    <property type="project" value="InterPro"/>
</dbReference>
<dbReference type="GO" id="GO:0000049">
    <property type="term" value="F:tRNA binding"/>
    <property type="evidence" value="ECO:0007669"/>
    <property type="project" value="UniProtKB-UniRule"/>
</dbReference>
<dbReference type="GO" id="GO:0006412">
    <property type="term" value="P:translation"/>
    <property type="evidence" value="ECO:0007669"/>
    <property type="project" value="UniProtKB-UniRule"/>
</dbReference>
<dbReference type="FunFam" id="3.30.1440.10:FF:000001">
    <property type="entry name" value="50S ribosomal protein L5"/>
    <property type="match status" value="1"/>
</dbReference>
<dbReference type="Gene3D" id="3.30.1440.10">
    <property type="match status" value="1"/>
</dbReference>
<dbReference type="HAMAP" id="MF_01333_B">
    <property type="entry name" value="Ribosomal_uL5_B"/>
    <property type="match status" value="1"/>
</dbReference>
<dbReference type="InterPro" id="IPR002132">
    <property type="entry name" value="Ribosomal_uL5"/>
</dbReference>
<dbReference type="InterPro" id="IPR020930">
    <property type="entry name" value="Ribosomal_uL5_bac-type"/>
</dbReference>
<dbReference type="InterPro" id="IPR031309">
    <property type="entry name" value="Ribosomal_uL5_C"/>
</dbReference>
<dbReference type="InterPro" id="IPR022803">
    <property type="entry name" value="Ribosomal_uL5_dom_sf"/>
</dbReference>
<dbReference type="InterPro" id="IPR031310">
    <property type="entry name" value="Ribosomal_uL5_N"/>
</dbReference>
<dbReference type="NCBIfam" id="NF000585">
    <property type="entry name" value="PRK00010.1"/>
    <property type="match status" value="1"/>
</dbReference>
<dbReference type="PANTHER" id="PTHR11994">
    <property type="entry name" value="60S RIBOSOMAL PROTEIN L11-RELATED"/>
    <property type="match status" value="1"/>
</dbReference>
<dbReference type="Pfam" id="PF00281">
    <property type="entry name" value="Ribosomal_L5"/>
    <property type="match status" value="1"/>
</dbReference>
<dbReference type="Pfam" id="PF00673">
    <property type="entry name" value="Ribosomal_L5_C"/>
    <property type="match status" value="1"/>
</dbReference>
<dbReference type="PIRSF" id="PIRSF002161">
    <property type="entry name" value="Ribosomal_L5"/>
    <property type="match status" value="1"/>
</dbReference>
<dbReference type="SUPFAM" id="SSF55282">
    <property type="entry name" value="RL5-like"/>
    <property type="match status" value="1"/>
</dbReference>
<accession>A6W5V0</accession>
<feature type="chain" id="PRO_1000086595" description="Large ribosomal subunit protein uL5">
    <location>
        <begin position="1"/>
        <end position="189"/>
    </location>
</feature>
<organism>
    <name type="scientific">Kineococcus radiotolerans (strain ATCC BAA-149 / DSM 14245 / SRS30216)</name>
    <dbReference type="NCBI Taxonomy" id="266940"/>
    <lineage>
        <taxon>Bacteria</taxon>
        <taxon>Bacillati</taxon>
        <taxon>Actinomycetota</taxon>
        <taxon>Actinomycetes</taxon>
        <taxon>Kineosporiales</taxon>
        <taxon>Kineosporiaceae</taxon>
        <taxon>Kineococcus</taxon>
    </lineage>
</organism>
<gene>
    <name evidence="1" type="primary">rplE</name>
    <name type="ordered locus">Krad_0700</name>
</gene>
<comment type="function">
    <text evidence="1">This is one of the proteins that bind and probably mediate the attachment of the 5S RNA into the large ribosomal subunit, where it forms part of the central protuberance. In the 70S ribosome it contacts protein S13 of the 30S subunit (bridge B1b), connecting the 2 subunits; this bridge is implicated in subunit movement. Contacts the P site tRNA; the 5S rRNA and some of its associated proteins might help stabilize positioning of ribosome-bound tRNAs.</text>
</comment>
<comment type="subunit">
    <text evidence="1">Part of the 50S ribosomal subunit; part of the 5S rRNA/L5/L18/L25 subcomplex. Contacts the 5S rRNA and the P site tRNA. Forms a bridge to the 30S subunit in the 70S ribosome.</text>
</comment>
<comment type="similarity">
    <text evidence="1">Belongs to the universal ribosomal protein uL5 family.</text>
</comment>
<protein>
    <recommendedName>
        <fullName evidence="1">Large ribosomal subunit protein uL5</fullName>
    </recommendedName>
    <alternativeName>
        <fullName evidence="2">50S ribosomal protein L5</fullName>
    </alternativeName>
</protein>
<sequence>MTTTTEARALPRLKQRYRDEIKGQLHEQFSYGNVMQIPGLTKVVVNMGVGEAARDSKLIDGAVRDLTAITGQKPQITKARKSIAQFKLREGMPIGCHTTLRGDRMWEFLDRLLSLALPRIRDFRGLSPKQFDGNGNYTFGLNEQSMFHEIDQDKIDRVRGMDITVVTTATTDDEGRALLRALGFPFKEN</sequence>
<evidence type="ECO:0000255" key="1">
    <source>
        <dbReference type="HAMAP-Rule" id="MF_01333"/>
    </source>
</evidence>
<evidence type="ECO:0000305" key="2"/>
<reference key="1">
    <citation type="journal article" date="2008" name="PLoS ONE">
        <title>Survival in nuclear waste, extreme resistance, and potential applications gleaned from the genome sequence of Kineococcus radiotolerans SRS30216.</title>
        <authorList>
            <person name="Bagwell C.E."/>
            <person name="Bhat S."/>
            <person name="Hawkins G.M."/>
            <person name="Smith B.W."/>
            <person name="Biswas T."/>
            <person name="Hoover T.R."/>
            <person name="Saunders E."/>
            <person name="Han C.S."/>
            <person name="Tsodikov O.V."/>
            <person name="Shimkets L.J."/>
        </authorList>
    </citation>
    <scope>NUCLEOTIDE SEQUENCE [LARGE SCALE GENOMIC DNA]</scope>
    <source>
        <strain>ATCC BAA-149 / DSM 14245 / SRS30216</strain>
    </source>
</reference>
<keyword id="KW-1185">Reference proteome</keyword>
<keyword id="KW-0687">Ribonucleoprotein</keyword>
<keyword id="KW-0689">Ribosomal protein</keyword>
<keyword id="KW-0694">RNA-binding</keyword>
<keyword id="KW-0699">rRNA-binding</keyword>
<keyword id="KW-0820">tRNA-binding</keyword>